<proteinExistence type="inferred from homology"/>
<gene>
    <name evidence="1" type="primary">proA</name>
    <name type="ordered locus">Syncc9605_1026</name>
</gene>
<sequence>MSSVPEPSAALLQRAVAVRRAAVDLGQTDDGQRALALQAMADALTERAATILAANREDLERSAGEGLAPALMARLKLDDTKLAAAIDGVRKVASLSDPLGCRQLHRELDQGLVLERVSVPLGVVGVIFEARPDAVMQIASLAIRSGNGALLKGGSEARCTNEAVMDALQAGLAASPVSADALALLTTRQESLALLRLDGLVDLIIPRGSNELVRFIQDNTRIPVLGHADGVCHLYVDAAADIAKAVRVAVDSKSQYPAACNAIETLLVHRSIAQPFLAAALPAFAAAGVKLRGDAESVALGVAEAATEEDWSTEYLDLILAVKLVDDLEAATDHIRSYGSRHTEVILTEDAQTADRFLAAVDSAGVYHNCSSRFADGFRYGFGAEVGISTQTLPPRGPVGLEGLVTYRYRLRGEGHITADYANGSCVFTHIDRPL</sequence>
<keyword id="KW-0028">Amino-acid biosynthesis</keyword>
<keyword id="KW-0963">Cytoplasm</keyword>
<keyword id="KW-0521">NADP</keyword>
<keyword id="KW-0560">Oxidoreductase</keyword>
<keyword id="KW-0641">Proline biosynthesis</keyword>
<dbReference type="EC" id="1.2.1.41" evidence="1"/>
<dbReference type="EMBL" id="CP000110">
    <property type="protein sequence ID" value="ABB34784.1"/>
    <property type="molecule type" value="Genomic_DNA"/>
</dbReference>
<dbReference type="RefSeq" id="WP_011364008.1">
    <property type="nucleotide sequence ID" value="NC_007516.1"/>
</dbReference>
<dbReference type="SMR" id="Q3AKU8"/>
<dbReference type="STRING" id="110662.Syncc9605_1026"/>
<dbReference type="KEGG" id="syd:Syncc9605_1026"/>
<dbReference type="eggNOG" id="COG0014">
    <property type="taxonomic scope" value="Bacteria"/>
</dbReference>
<dbReference type="HOGENOM" id="CLU_030231_0_1_3"/>
<dbReference type="UniPathway" id="UPA00098">
    <property type="reaction ID" value="UER00360"/>
</dbReference>
<dbReference type="GO" id="GO:0005737">
    <property type="term" value="C:cytoplasm"/>
    <property type="evidence" value="ECO:0007669"/>
    <property type="project" value="UniProtKB-SubCell"/>
</dbReference>
<dbReference type="GO" id="GO:0004350">
    <property type="term" value="F:glutamate-5-semialdehyde dehydrogenase activity"/>
    <property type="evidence" value="ECO:0007669"/>
    <property type="project" value="UniProtKB-UniRule"/>
</dbReference>
<dbReference type="GO" id="GO:0050661">
    <property type="term" value="F:NADP binding"/>
    <property type="evidence" value="ECO:0007669"/>
    <property type="project" value="InterPro"/>
</dbReference>
<dbReference type="GO" id="GO:0055129">
    <property type="term" value="P:L-proline biosynthetic process"/>
    <property type="evidence" value="ECO:0007669"/>
    <property type="project" value="UniProtKB-UniRule"/>
</dbReference>
<dbReference type="CDD" id="cd07079">
    <property type="entry name" value="ALDH_F18-19_ProA-GPR"/>
    <property type="match status" value="1"/>
</dbReference>
<dbReference type="FunFam" id="3.40.309.10:FF:000006">
    <property type="entry name" value="Gamma-glutamyl phosphate reductase"/>
    <property type="match status" value="1"/>
</dbReference>
<dbReference type="Gene3D" id="3.40.605.10">
    <property type="entry name" value="Aldehyde Dehydrogenase, Chain A, domain 1"/>
    <property type="match status" value="1"/>
</dbReference>
<dbReference type="Gene3D" id="3.40.309.10">
    <property type="entry name" value="Aldehyde Dehydrogenase, Chain A, domain 2"/>
    <property type="match status" value="1"/>
</dbReference>
<dbReference type="HAMAP" id="MF_00412">
    <property type="entry name" value="ProA"/>
    <property type="match status" value="1"/>
</dbReference>
<dbReference type="InterPro" id="IPR016161">
    <property type="entry name" value="Ald_DH/histidinol_DH"/>
</dbReference>
<dbReference type="InterPro" id="IPR016163">
    <property type="entry name" value="Ald_DH_C"/>
</dbReference>
<dbReference type="InterPro" id="IPR016162">
    <property type="entry name" value="Ald_DH_N"/>
</dbReference>
<dbReference type="InterPro" id="IPR015590">
    <property type="entry name" value="Aldehyde_DH_dom"/>
</dbReference>
<dbReference type="InterPro" id="IPR020593">
    <property type="entry name" value="G-glutamylP_reductase_CS"/>
</dbReference>
<dbReference type="InterPro" id="IPR012134">
    <property type="entry name" value="Glu-5-SA_DH"/>
</dbReference>
<dbReference type="InterPro" id="IPR000965">
    <property type="entry name" value="GPR_dom"/>
</dbReference>
<dbReference type="NCBIfam" id="NF001221">
    <property type="entry name" value="PRK00197.1"/>
    <property type="match status" value="1"/>
</dbReference>
<dbReference type="NCBIfam" id="TIGR00407">
    <property type="entry name" value="proA"/>
    <property type="match status" value="1"/>
</dbReference>
<dbReference type="PANTHER" id="PTHR11063:SF8">
    <property type="entry name" value="DELTA-1-PYRROLINE-5-CARBOXYLATE SYNTHASE"/>
    <property type="match status" value="1"/>
</dbReference>
<dbReference type="PANTHER" id="PTHR11063">
    <property type="entry name" value="GLUTAMATE SEMIALDEHYDE DEHYDROGENASE"/>
    <property type="match status" value="1"/>
</dbReference>
<dbReference type="Pfam" id="PF00171">
    <property type="entry name" value="Aldedh"/>
    <property type="match status" value="1"/>
</dbReference>
<dbReference type="PIRSF" id="PIRSF000151">
    <property type="entry name" value="GPR"/>
    <property type="match status" value="1"/>
</dbReference>
<dbReference type="SUPFAM" id="SSF53720">
    <property type="entry name" value="ALDH-like"/>
    <property type="match status" value="1"/>
</dbReference>
<dbReference type="PROSITE" id="PS01223">
    <property type="entry name" value="PROA"/>
    <property type="match status" value="1"/>
</dbReference>
<feature type="chain" id="PRO_0000252598" description="Gamma-glutamyl phosphate reductase">
    <location>
        <begin position="1"/>
        <end position="435"/>
    </location>
</feature>
<comment type="function">
    <text evidence="1">Catalyzes the NADPH-dependent reduction of L-glutamate 5-phosphate into L-glutamate 5-semialdehyde and phosphate. The product spontaneously undergoes cyclization to form 1-pyrroline-5-carboxylate.</text>
</comment>
<comment type="catalytic activity">
    <reaction evidence="1">
        <text>L-glutamate 5-semialdehyde + phosphate + NADP(+) = L-glutamyl 5-phosphate + NADPH + H(+)</text>
        <dbReference type="Rhea" id="RHEA:19541"/>
        <dbReference type="ChEBI" id="CHEBI:15378"/>
        <dbReference type="ChEBI" id="CHEBI:43474"/>
        <dbReference type="ChEBI" id="CHEBI:57783"/>
        <dbReference type="ChEBI" id="CHEBI:58066"/>
        <dbReference type="ChEBI" id="CHEBI:58274"/>
        <dbReference type="ChEBI" id="CHEBI:58349"/>
        <dbReference type="EC" id="1.2.1.41"/>
    </reaction>
</comment>
<comment type="pathway">
    <text evidence="1">Amino-acid biosynthesis; L-proline biosynthesis; L-glutamate 5-semialdehyde from L-glutamate: step 2/2.</text>
</comment>
<comment type="subcellular location">
    <subcellularLocation>
        <location evidence="1">Cytoplasm</location>
    </subcellularLocation>
</comment>
<comment type="similarity">
    <text evidence="1">Belongs to the gamma-glutamyl phosphate reductase family.</text>
</comment>
<protein>
    <recommendedName>
        <fullName evidence="1">Gamma-glutamyl phosphate reductase</fullName>
        <shortName evidence="1">GPR</shortName>
        <ecNumber evidence="1">1.2.1.41</ecNumber>
    </recommendedName>
    <alternativeName>
        <fullName evidence="1">Glutamate-5-semialdehyde dehydrogenase</fullName>
    </alternativeName>
    <alternativeName>
        <fullName evidence="1">Glutamyl-gamma-semialdehyde dehydrogenase</fullName>
        <shortName evidence="1">GSA dehydrogenase</shortName>
    </alternativeName>
</protein>
<name>PROA_SYNSC</name>
<reference key="1">
    <citation type="submission" date="2005-07" db="EMBL/GenBank/DDBJ databases">
        <title>Complete sequence of Synechococcus sp. CC9605.</title>
        <authorList>
            <consortium name="US DOE Joint Genome Institute"/>
            <person name="Copeland A."/>
            <person name="Lucas S."/>
            <person name="Lapidus A."/>
            <person name="Barry K."/>
            <person name="Detter J.C."/>
            <person name="Glavina T."/>
            <person name="Hammon N."/>
            <person name="Israni S."/>
            <person name="Pitluck S."/>
            <person name="Schmutz J."/>
            <person name="Martinez M."/>
            <person name="Larimer F."/>
            <person name="Land M."/>
            <person name="Kyrpides N."/>
            <person name="Ivanova N."/>
            <person name="Richardson P."/>
        </authorList>
    </citation>
    <scope>NUCLEOTIDE SEQUENCE [LARGE SCALE GENOMIC DNA]</scope>
    <source>
        <strain>CC9605</strain>
    </source>
</reference>
<accession>Q3AKU8</accession>
<organism>
    <name type="scientific">Synechococcus sp. (strain CC9605)</name>
    <dbReference type="NCBI Taxonomy" id="110662"/>
    <lineage>
        <taxon>Bacteria</taxon>
        <taxon>Bacillati</taxon>
        <taxon>Cyanobacteriota</taxon>
        <taxon>Cyanophyceae</taxon>
        <taxon>Synechococcales</taxon>
        <taxon>Synechococcaceae</taxon>
        <taxon>Synechococcus</taxon>
    </lineage>
</organism>
<evidence type="ECO:0000255" key="1">
    <source>
        <dbReference type="HAMAP-Rule" id="MF_00412"/>
    </source>
</evidence>